<organism>
    <name type="scientific">Shewanella frigidimarina (strain NCIMB 400)</name>
    <dbReference type="NCBI Taxonomy" id="318167"/>
    <lineage>
        <taxon>Bacteria</taxon>
        <taxon>Pseudomonadati</taxon>
        <taxon>Pseudomonadota</taxon>
        <taxon>Gammaproteobacteria</taxon>
        <taxon>Alteromonadales</taxon>
        <taxon>Shewanellaceae</taxon>
        <taxon>Shewanella</taxon>
    </lineage>
</organism>
<comment type="function">
    <text evidence="1">Represses a number of genes involved in the response to DNA damage (SOS response), including recA and lexA. In the presence of single-stranded DNA, RecA interacts with LexA causing an autocatalytic cleavage which disrupts the DNA-binding part of LexA, leading to derepression of the SOS regulon and eventually DNA repair.</text>
</comment>
<comment type="catalytic activity">
    <reaction evidence="1">
        <text>Hydrolysis of Ala-|-Gly bond in repressor LexA.</text>
        <dbReference type="EC" id="3.4.21.88"/>
    </reaction>
</comment>
<comment type="subunit">
    <text evidence="1">Homodimer.</text>
</comment>
<comment type="similarity">
    <text evidence="1">Belongs to the peptidase S24 family.</text>
</comment>
<feature type="chain" id="PRO_1000001336" description="LexA repressor">
    <location>
        <begin position="1"/>
        <end position="204"/>
    </location>
</feature>
<feature type="DNA-binding region" description="H-T-H motif" evidence="1">
    <location>
        <begin position="28"/>
        <end position="48"/>
    </location>
</feature>
<feature type="active site" description="For autocatalytic cleavage activity" evidence="1">
    <location>
        <position position="121"/>
    </location>
</feature>
<feature type="active site" description="For autocatalytic cleavage activity" evidence="1">
    <location>
        <position position="158"/>
    </location>
</feature>
<feature type="site" description="Cleavage; by autolysis" evidence="1">
    <location>
        <begin position="86"/>
        <end position="87"/>
    </location>
</feature>
<keyword id="KW-0068">Autocatalytic cleavage</keyword>
<keyword id="KW-0227">DNA damage</keyword>
<keyword id="KW-0234">DNA repair</keyword>
<keyword id="KW-0235">DNA replication</keyword>
<keyword id="KW-0238">DNA-binding</keyword>
<keyword id="KW-0378">Hydrolase</keyword>
<keyword id="KW-1185">Reference proteome</keyword>
<keyword id="KW-0678">Repressor</keyword>
<keyword id="KW-0742">SOS response</keyword>
<keyword id="KW-0804">Transcription</keyword>
<keyword id="KW-0805">Transcription regulation</keyword>
<proteinExistence type="inferred from homology"/>
<evidence type="ECO:0000255" key="1">
    <source>
        <dbReference type="HAMAP-Rule" id="MF_00015"/>
    </source>
</evidence>
<reference key="1">
    <citation type="submission" date="2006-08" db="EMBL/GenBank/DDBJ databases">
        <title>Complete sequence of Shewanella frigidimarina NCIMB 400.</title>
        <authorList>
            <consortium name="US DOE Joint Genome Institute"/>
            <person name="Copeland A."/>
            <person name="Lucas S."/>
            <person name="Lapidus A."/>
            <person name="Barry K."/>
            <person name="Detter J.C."/>
            <person name="Glavina del Rio T."/>
            <person name="Hammon N."/>
            <person name="Israni S."/>
            <person name="Dalin E."/>
            <person name="Tice H."/>
            <person name="Pitluck S."/>
            <person name="Fredrickson J.K."/>
            <person name="Kolker E."/>
            <person name="McCuel L.A."/>
            <person name="DiChristina T."/>
            <person name="Nealson K.H."/>
            <person name="Newman D."/>
            <person name="Tiedje J.M."/>
            <person name="Zhou J."/>
            <person name="Romine M.F."/>
            <person name="Culley D.E."/>
            <person name="Serres M."/>
            <person name="Chertkov O."/>
            <person name="Brettin T."/>
            <person name="Bruce D."/>
            <person name="Han C."/>
            <person name="Tapia R."/>
            <person name="Gilna P."/>
            <person name="Schmutz J."/>
            <person name="Larimer F."/>
            <person name="Land M."/>
            <person name="Hauser L."/>
            <person name="Kyrpides N."/>
            <person name="Mikhailova N."/>
            <person name="Richardson P."/>
        </authorList>
    </citation>
    <scope>NUCLEOTIDE SEQUENCE [LARGE SCALE GENOMIC DNA]</scope>
    <source>
        <strain>NCIMB 400</strain>
    </source>
</reference>
<accession>Q089E2</accession>
<sequence>MRPLTPRQAEILDLIKNNIAETGMPPTRAEIANRLGFKSANAAEEHLKALAKKGFIEIMPGTSRGIRLPQEEQVETGLPLIGQVAAGEPILAQEHVEQYYQVDPNMFKPAADFLLRVRGDSMKNIGILEGDLLAVHKMQQARNGQVVVARVDDDVTVKRFEQKGNVIYLHAENEDYNPIKVDLSCQSLTIEGLAVGVIRNGDWL</sequence>
<gene>
    <name evidence="1" type="primary">lexA</name>
    <name type="ordered locus">Sfri_0260</name>
</gene>
<protein>
    <recommendedName>
        <fullName evidence="1">LexA repressor</fullName>
        <ecNumber evidence="1">3.4.21.88</ecNumber>
    </recommendedName>
</protein>
<name>LEXA_SHEFN</name>
<dbReference type="EC" id="3.4.21.88" evidence="1"/>
<dbReference type="EMBL" id="CP000447">
    <property type="protein sequence ID" value="ABI70123.1"/>
    <property type="molecule type" value="Genomic_DNA"/>
</dbReference>
<dbReference type="RefSeq" id="WP_011635750.1">
    <property type="nucleotide sequence ID" value="NC_008345.1"/>
</dbReference>
<dbReference type="SMR" id="Q089E2"/>
<dbReference type="STRING" id="318167.Sfri_0260"/>
<dbReference type="MEROPS" id="S24.001"/>
<dbReference type="KEGG" id="sfr:Sfri_0260"/>
<dbReference type="eggNOG" id="COG1974">
    <property type="taxonomic scope" value="Bacteria"/>
</dbReference>
<dbReference type="HOGENOM" id="CLU_066192_45_3_6"/>
<dbReference type="OrthoDB" id="9802364at2"/>
<dbReference type="Proteomes" id="UP000000684">
    <property type="component" value="Chromosome"/>
</dbReference>
<dbReference type="GO" id="GO:0003677">
    <property type="term" value="F:DNA binding"/>
    <property type="evidence" value="ECO:0007669"/>
    <property type="project" value="UniProtKB-UniRule"/>
</dbReference>
<dbReference type="GO" id="GO:0004252">
    <property type="term" value="F:serine-type endopeptidase activity"/>
    <property type="evidence" value="ECO:0007669"/>
    <property type="project" value="UniProtKB-UniRule"/>
</dbReference>
<dbReference type="GO" id="GO:0006281">
    <property type="term" value="P:DNA repair"/>
    <property type="evidence" value="ECO:0007669"/>
    <property type="project" value="UniProtKB-UniRule"/>
</dbReference>
<dbReference type="GO" id="GO:0006260">
    <property type="term" value="P:DNA replication"/>
    <property type="evidence" value="ECO:0007669"/>
    <property type="project" value="UniProtKB-UniRule"/>
</dbReference>
<dbReference type="GO" id="GO:0045892">
    <property type="term" value="P:negative regulation of DNA-templated transcription"/>
    <property type="evidence" value="ECO:0007669"/>
    <property type="project" value="UniProtKB-UniRule"/>
</dbReference>
<dbReference type="GO" id="GO:0006508">
    <property type="term" value="P:proteolysis"/>
    <property type="evidence" value="ECO:0007669"/>
    <property type="project" value="InterPro"/>
</dbReference>
<dbReference type="GO" id="GO:0009432">
    <property type="term" value="P:SOS response"/>
    <property type="evidence" value="ECO:0007669"/>
    <property type="project" value="UniProtKB-UniRule"/>
</dbReference>
<dbReference type="CDD" id="cd06529">
    <property type="entry name" value="S24_LexA-like"/>
    <property type="match status" value="1"/>
</dbReference>
<dbReference type="FunFam" id="1.10.10.10:FF:000009">
    <property type="entry name" value="LexA repressor"/>
    <property type="match status" value="1"/>
</dbReference>
<dbReference type="FunFam" id="2.10.109.10:FF:000001">
    <property type="entry name" value="LexA repressor"/>
    <property type="match status" value="1"/>
</dbReference>
<dbReference type="Gene3D" id="2.10.109.10">
    <property type="entry name" value="Umud Fragment, subunit A"/>
    <property type="match status" value="1"/>
</dbReference>
<dbReference type="Gene3D" id="1.10.10.10">
    <property type="entry name" value="Winged helix-like DNA-binding domain superfamily/Winged helix DNA-binding domain"/>
    <property type="match status" value="1"/>
</dbReference>
<dbReference type="HAMAP" id="MF_00015">
    <property type="entry name" value="LexA"/>
    <property type="match status" value="1"/>
</dbReference>
<dbReference type="InterPro" id="IPR006200">
    <property type="entry name" value="LexA"/>
</dbReference>
<dbReference type="InterPro" id="IPR039418">
    <property type="entry name" value="LexA-like"/>
</dbReference>
<dbReference type="InterPro" id="IPR036286">
    <property type="entry name" value="LexA/Signal_pep-like_sf"/>
</dbReference>
<dbReference type="InterPro" id="IPR006199">
    <property type="entry name" value="LexA_DNA-bd_dom"/>
</dbReference>
<dbReference type="InterPro" id="IPR050077">
    <property type="entry name" value="LexA_repressor"/>
</dbReference>
<dbReference type="InterPro" id="IPR006197">
    <property type="entry name" value="Peptidase_S24_LexA"/>
</dbReference>
<dbReference type="InterPro" id="IPR015927">
    <property type="entry name" value="Peptidase_S24_S26A/B/C"/>
</dbReference>
<dbReference type="InterPro" id="IPR036388">
    <property type="entry name" value="WH-like_DNA-bd_sf"/>
</dbReference>
<dbReference type="InterPro" id="IPR036390">
    <property type="entry name" value="WH_DNA-bd_sf"/>
</dbReference>
<dbReference type="NCBIfam" id="TIGR00498">
    <property type="entry name" value="lexA"/>
    <property type="match status" value="1"/>
</dbReference>
<dbReference type="PANTHER" id="PTHR33516">
    <property type="entry name" value="LEXA REPRESSOR"/>
    <property type="match status" value="1"/>
</dbReference>
<dbReference type="PANTHER" id="PTHR33516:SF2">
    <property type="entry name" value="LEXA REPRESSOR-RELATED"/>
    <property type="match status" value="1"/>
</dbReference>
<dbReference type="Pfam" id="PF01726">
    <property type="entry name" value="LexA_DNA_bind"/>
    <property type="match status" value="1"/>
</dbReference>
<dbReference type="Pfam" id="PF00717">
    <property type="entry name" value="Peptidase_S24"/>
    <property type="match status" value="1"/>
</dbReference>
<dbReference type="PRINTS" id="PR00726">
    <property type="entry name" value="LEXASERPTASE"/>
</dbReference>
<dbReference type="SUPFAM" id="SSF51306">
    <property type="entry name" value="LexA/Signal peptidase"/>
    <property type="match status" value="1"/>
</dbReference>
<dbReference type="SUPFAM" id="SSF46785">
    <property type="entry name" value="Winged helix' DNA-binding domain"/>
    <property type="match status" value="1"/>
</dbReference>